<proteinExistence type="evidence at protein level"/>
<feature type="chain" id="PRO_0000206210" description="Photosystem I reaction center subunit psaK, chloroplastic">
    <location>
        <begin position="1"/>
        <end position="20" status="greater than"/>
    </location>
</feature>
<feature type="transmembrane region" description="Helical" evidence="2">
    <location>
        <begin position="2"/>
        <end position="20" status="greater than"/>
    </location>
</feature>
<feature type="non-terminal residue">
    <location>
        <position position="20"/>
    </location>
</feature>
<gene>
    <name type="primary">PSAK</name>
</gene>
<name>PSAK_PEA</name>
<protein>
    <recommendedName>
        <fullName>Photosystem I reaction center subunit psaK, chloroplastic</fullName>
    </recommendedName>
    <alternativeName>
        <fullName>Light-harvesting 5 kDa protein</fullName>
    </alternativeName>
    <alternativeName>
        <fullName>PSI-K</fullName>
    </alternativeName>
    <alternativeName>
        <fullName>Photosystem I subunit X</fullName>
    </alternativeName>
</protein>
<comment type="subcellular location">
    <subcellularLocation>
        <location evidence="1">Plastid</location>
        <location evidence="1">Chloroplast thylakoid membrane</location>
        <topology evidence="1">Multi-pass membrane protein</topology>
    </subcellularLocation>
</comment>
<comment type="similarity">
    <text evidence="3">Belongs to the PsaG/PsaK family.</text>
</comment>
<keyword id="KW-0150">Chloroplast</keyword>
<keyword id="KW-0903">Direct protein sequencing</keyword>
<keyword id="KW-0472">Membrane</keyword>
<keyword id="KW-0602">Photosynthesis</keyword>
<keyword id="KW-0603">Photosystem I</keyword>
<keyword id="KW-0934">Plastid</keyword>
<keyword id="KW-0793">Thylakoid</keyword>
<keyword id="KW-0812">Transmembrane</keyword>
<keyword id="KW-1133">Transmembrane helix</keyword>
<organism>
    <name type="scientific">Pisum sativum</name>
    <name type="common">Garden pea</name>
    <name type="synonym">Lathyrus oleraceus</name>
    <dbReference type="NCBI Taxonomy" id="3888"/>
    <lineage>
        <taxon>Eukaryota</taxon>
        <taxon>Viridiplantae</taxon>
        <taxon>Streptophyta</taxon>
        <taxon>Embryophyta</taxon>
        <taxon>Tracheophyta</taxon>
        <taxon>Spermatophyta</taxon>
        <taxon>Magnoliopsida</taxon>
        <taxon>eudicotyledons</taxon>
        <taxon>Gunneridae</taxon>
        <taxon>Pentapetalae</taxon>
        <taxon>rosids</taxon>
        <taxon>fabids</taxon>
        <taxon>Fabales</taxon>
        <taxon>Fabaceae</taxon>
        <taxon>Papilionoideae</taxon>
        <taxon>50 kb inversion clade</taxon>
        <taxon>NPAAA clade</taxon>
        <taxon>Hologalegina</taxon>
        <taxon>IRL clade</taxon>
        <taxon>Fabeae</taxon>
        <taxon>Pisum</taxon>
    </lineage>
</organism>
<dbReference type="PIR" id="S09735">
    <property type="entry name" value="S09735"/>
</dbReference>
<dbReference type="GO" id="GO:0009535">
    <property type="term" value="C:chloroplast thylakoid membrane"/>
    <property type="evidence" value="ECO:0007669"/>
    <property type="project" value="UniProtKB-SubCell"/>
</dbReference>
<dbReference type="GO" id="GO:0009522">
    <property type="term" value="C:photosystem I"/>
    <property type="evidence" value="ECO:0007669"/>
    <property type="project" value="UniProtKB-KW"/>
</dbReference>
<dbReference type="GO" id="GO:0015979">
    <property type="term" value="P:photosynthesis"/>
    <property type="evidence" value="ECO:0007669"/>
    <property type="project" value="UniProtKB-KW"/>
</dbReference>
<dbReference type="Gene3D" id="1.10.286.40">
    <property type="entry name" value="Chlorophyll a-b binding protein like"/>
    <property type="match status" value="1"/>
</dbReference>
<dbReference type="InterPro" id="IPR023618">
    <property type="entry name" value="PSI_PsaG/PsaK_dom"/>
</dbReference>
<sequence length="20" mass="2148">DFIGSSTNVIMVASTTLMLF</sequence>
<evidence type="ECO:0000250" key="1"/>
<evidence type="ECO:0000255" key="2"/>
<evidence type="ECO:0000305" key="3"/>
<reference key="1">
    <citation type="journal article" date="1990" name="FEBS Lett.">
        <title>Polypeptide composition of higher plant photosystem I complex. Identification of psaI, psaJ and psaK gene products.</title>
        <authorList>
            <person name="Ikeuchi M."/>
            <person name="Hirano A."/>
            <person name="Hiyama T."/>
            <person name="Inoue Y."/>
        </authorList>
    </citation>
    <scope>PROTEIN SEQUENCE</scope>
</reference>
<accession>P17226</accession>